<proteinExistence type="inferred from homology"/>
<evidence type="ECO:0000250" key="1"/>
<evidence type="ECO:0000255" key="2"/>
<evidence type="ECO:0000305" key="3"/>
<dbReference type="EMBL" id="BA000018">
    <property type="protein sequence ID" value="BAB41814.1"/>
    <property type="molecule type" value="Genomic_DNA"/>
</dbReference>
<dbReference type="PIR" id="C89832">
    <property type="entry name" value="C89832"/>
</dbReference>
<dbReference type="RefSeq" id="WP_001071971.1">
    <property type="nucleotide sequence ID" value="NC_002745.2"/>
</dbReference>
<dbReference type="SMR" id="Q7A724"/>
<dbReference type="EnsemblBacteria" id="BAB41814">
    <property type="protein sequence ID" value="BAB41814"/>
    <property type="gene ID" value="BAB41814"/>
</dbReference>
<dbReference type="KEGG" id="sau:SA0582"/>
<dbReference type="HOGENOM" id="CLU_086615_3_2_9"/>
<dbReference type="GO" id="GO:0005886">
    <property type="term" value="C:plasma membrane"/>
    <property type="evidence" value="ECO:0007669"/>
    <property type="project" value="UniProtKB-SubCell"/>
</dbReference>
<dbReference type="GO" id="GO:0015297">
    <property type="term" value="F:antiporter activity"/>
    <property type="evidence" value="ECO:0007669"/>
    <property type="project" value="UniProtKB-KW"/>
</dbReference>
<dbReference type="GO" id="GO:0008324">
    <property type="term" value="F:monoatomic cation transmembrane transporter activity"/>
    <property type="evidence" value="ECO:0007669"/>
    <property type="project" value="InterPro"/>
</dbReference>
<dbReference type="InterPro" id="IPR002758">
    <property type="entry name" value="Cation_antiport_E"/>
</dbReference>
<dbReference type="NCBIfam" id="NF006517">
    <property type="entry name" value="PRK08965.1-1"/>
    <property type="match status" value="1"/>
</dbReference>
<dbReference type="PANTHER" id="PTHR34584">
    <property type="entry name" value="NA(+)/H(+) ANTIPORTER SUBUNIT E1"/>
    <property type="match status" value="1"/>
</dbReference>
<dbReference type="PANTHER" id="PTHR34584:SF1">
    <property type="entry name" value="NA(+)_H(+) ANTIPORTER SUBUNIT E1"/>
    <property type="match status" value="1"/>
</dbReference>
<dbReference type="Pfam" id="PF01899">
    <property type="entry name" value="MNHE"/>
    <property type="match status" value="1"/>
</dbReference>
<dbReference type="PIRSF" id="PIRSF019239">
    <property type="entry name" value="MrpE"/>
    <property type="match status" value="1"/>
</dbReference>
<reference key="1">
    <citation type="journal article" date="2001" name="Lancet">
        <title>Whole genome sequencing of meticillin-resistant Staphylococcus aureus.</title>
        <authorList>
            <person name="Kuroda M."/>
            <person name="Ohta T."/>
            <person name="Uchiyama I."/>
            <person name="Baba T."/>
            <person name="Yuzawa H."/>
            <person name="Kobayashi I."/>
            <person name="Cui L."/>
            <person name="Oguchi A."/>
            <person name="Aoki K."/>
            <person name="Nagai Y."/>
            <person name="Lian J.-Q."/>
            <person name="Ito T."/>
            <person name="Kanamori M."/>
            <person name="Matsumaru H."/>
            <person name="Maruyama A."/>
            <person name="Murakami H."/>
            <person name="Hosoyama A."/>
            <person name="Mizutani-Ui Y."/>
            <person name="Takahashi N.K."/>
            <person name="Sawano T."/>
            <person name="Inoue R."/>
            <person name="Kaito C."/>
            <person name="Sekimizu K."/>
            <person name="Hirakawa H."/>
            <person name="Kuhara S."/>
            <person name="Goto S."/>
            <person name="Yabuzaki J."/>
            <person name="Kanehisa M."/>
            <person name="Yamashita A."/>
            <person name="Oshima K."/>
            <person name="Furuya K."/>
            <person name="Yoshino C."/>
            <person name="Shiba T."/>
            <person name="Hattori M."/>
            <person name="Ogasawara N."/>
            <person name="Hayashi H."/>
            <person name="Hiramatsu K."/>
        </authorList>
    </citation>
    <scope>NUCLEOTIDE SEQUENCE [LARGE SCALE GENOMIC DNA]</scope>
    <source>
        <strain>N315</strain>
    </source>
</reference>
<gene>
    <name type="primary">mnhE2</name>
    <name type="synonym">mrpE2</name>
    <name type="ordered locus">SA0582</name>
</gene>
<organism>
    <name type="scientific">Staphylococcus aureus (strain N315)</name>
    <dbReference type="NCBI Taxonomy" id="158879"/>
    <lineage>
        <taxon>Bacteria</taxon>
        <taxon>Bacillati</taxon>
        <taxon>Bacillota</taxon>
        <taxon>Bacilli</taxon>
        <taxon>Bacillales</taxon>
        <taxon>Staphylococcaceae</taxon>
        <taxon>Staphylococcus</taxon>
    </lineage>
</organism>
<comment type="subunit">
    <text evidence="1">May form a heterooligomeric complex that consists of seven subunits: mnhA2, mnhB2, mnhC2, mnhD2, mnhE2, mnhF2 and mnhG2.</text>
</comment>
<comment type="subcellular location">
    <subcellularLocation>
        <location evidence="3">Cell membrane</location>
        <topology evidence="3">Multi-pass membrane protein</topology>
    </subcellularLocation>
</comment>
<comment type="similarity">
    <text evidence="3">Belongs to the CPA3 antiporters (TC 2.A.63) subunit E family.</text>
</comment>
<sequence>MNQIVLNIIIAFLWVLFQDEDHFKFSTFFSGYLIGLIVIYILHRFFSDDFYVRKIWVAIKFLGVYLYQLITSSISTINYILFKTKDMNPGLLSYETRLTSDWAITFLTILIIITPGSTVIRISQDSKKFFIHSIDVSEKEKDSLLRSIKHYEDLILEVSR</sequence>
<keyword id="KW-0050">Antiport</keyword>
<keyword id="KW-1003">Cell membrane</keyword>
<keyword id="KW-0406">Ion transport</keyword>
<keyword id="KW-0472">Membrane</keyword>
<keyword id="KW-0812">Transmembrane</keyword>
<keyword id="KW-1133">Transmembrane helix</keyword>
<keyword id="KW-0813">Transport</keyword>
<protein>
    <recommendedName>
        <fullName>Putative antiporter subunit mnhE2</fullName>
    </recommendedName>
    <alternativeName>
        <fullName>Mrp complex subunit E2</fullName>
    </alternativeName>
    <alternativeName>
        <fullName>Putative NADH-ubiquinone oxidoreductase subunit mnhE2</fullName>
    </alternativeName>
</protein>
<name>MNHE2_STAAN</name>
<feature type="chain" id="PRO_0000372219" description="Putative antiporter subunit mnhE2">
    <location>
        <begin position="1"/>
        <end position="160"/>
    </location>
</feature>
<feature type="transmembrane region" description="Helical" evidence="2">
    <location>
        <begin position="22"/>
        <end position="42"/>
    </location>
</feature>
<feature type="transmembrane region" description="Helical" evidence="2">
    <location>
        <begin position="55"/>
        <end position="75"/>
    </location>
</feature>
<feature type="transmembrane region" description="Helical" evidence="2">
    <location>
        <begin position="100"/>
        <end position="120"/>
    </location>
</feature>
<accession>Q7A724</accession>